<evidence type="ECO:0000250" key="1">
    <source>
        <dbReference type="UniProtKB" id="Q38874"/>
    </source>
</evidence>
<evidence type="ECO:0000255" key="2">
    <source>
        <dbReference type="PROSITE-ProRule" id="PRU00108"/>
    </source>
</evidence>
<evidence type="ECO:0000255" key="3">
    <source>
        <dbReference type="PROSITE-ProRule" id="PRU00559"/>
    </source>
</evidence>
<evidence type="ECO:0000256" key="4">
    <source>
        <dbReference type="SAM" id="MobiDB-lite"/>
    </source>
</evidence>
<evidence type="ECO:0000269" key="5">
    <source>
    </source>
</evidence>
<evidence type="ECO:0000269" key="6">
    <source>
    </source>
</evidence>
<evidence type="ECO:0000269" key="7">
    <source>
    </source>
</evidence>
<dbReference type="EMBL" id="X61308">
    <property type="protein sequence ID" value="CAA43605.1"/>
    <property type="molecule type" value="mRNA"/>
</dbReference>
<dbReference type="PIR" id="S14283">
    <property type="entry name" value="S14283"/>
</dbReference>
<dbReference type="RefSeq" id="NP_001266662.2">
    <property type="nucleotide sequence ID" value="NM_001279733.2"/>
</dbReference>
<dbReference type="SMR" id="P24345"/>
<dbReference type="BioGRID" id="951608">
    <property type="interactions" value="2"/>
</dbReference>
<dbReference type="FunCoup" id="P24345">
    <property type="interactions" value="297"/>
</dbReference>
<dbReference type="STRING" id="4577.P24345"/>
<dbReference type="PaxDb" id="4577-GRMZM2G017087_P02"/>
<dbReference type="EnsemblPlants" id="Zm00001eb055920_T001">
    <property type="protein sequence ID" value="Zm00001eb055920_P001"/>
    <property type="gene ID" value="Zm00001eb055920"/>
</dbReference>
<dbReference type="GeneID" id="542391"/>
<dbReference type="Gramene" id="Zm00001eb055920_T001">
    <property type="protein sequence ID" value="Zm00001eb055920_P001"/>
    <property type="gene ID" value="Zm00001eb055920"/>
</dbReference>
<dbReference type="KEGG" id="zma:542391"/>
<dbReference type="MaizeGDB" id="65584"/>
<dbReference type="eggNOG" id="KOG0773">
    <property type="taxonomic scope" value="Eukaryota"/>
</dbReference>
<dbReference type="InParanoid" id="P24345"/>
<dbReference type="OrthoDB" id="10056939at2759"/>
<dbReference type="Proteomes" id="UP000007305">
    <property type="component" value="Chromosome 1"/>
</dbReference>
<dbReference type="ExpressionAtlas" id="P24345">
    <property type="expression patterns" value="baseline and differential"/>
</dbReference>
<dbReference type="GO" id="GO:0005737">
    <property type="term" value="C:cytoplasm"/>
    <property type="evidence" value="ECO:0000314"/>
    <property type="project" value="UniProtKB"/>
</dbReference>
<dbReference type="GO" id="GO:0015630">
    <property type="term" value="C:microtubule cytoskeleton"/>
    <property type="evidence" value="ECO:0000314"/>
    <property type="project" value="UniProtKB"/>
</dbReference>
<dbReference type="GO" id="GO:0005634">
    <property type="term" value="C:nucleus"/>
    <property type="evidence" value="ECO:0000314"/>
    <property type="project" value="UniProtKB"/>
</dbReference>
<dbReference type="GO" id="GO:0009506">
    <property type="term" value="C:plasmodesma"/>
    <property type="evidence" value="ECO:0000314"/>
    <property type="project" value="UniProtKB"/>
</dbReference>
<dbReference type="GO" id="GO:0000981">
    <property type="term" value="F:DNA-binding transcription factor activity, RNA polymerase II-specific"/>
    <property type="evidence" value="ECO:0007669"/>
    <property type="project" value="InterPro"/>
</dbReference>
<dbReference type="GO" id="GO:0042803">
    <property type="term" value="F:protein homodimerization activity"/>
    <property type="evidence" value="ECO:0000250"/>
    <property type="project" value="UniProtKB"/>
</dbReference>
<dbReference type="GO" id="GO:0003723">
    <property type="term" value="F:RNA binding"/>
    <property type="evidence" value="ECO:0000314"/>
    <property type="project" value="UniProtKB"/>
</dbReference>
<dbReference type="GO" id="GO:0043565">
    <property type="term" value="F:sequence-specific DNA binding"/>
    <property type="evidence" value="ECO:0007669"/>
    <property type="project" value="EnsemblPlants"/>
</dbReference>
<dbReference type="GO" id="GO:0009901">
    <property type="term" value="P:anther dehiscence"/>
    <property type="evidence" value="ECO:0007669"/>
    <property type="project" value="EnsemblPlants"/>
</dbReference>
<dbReference type="GO" id="GO:0010930">
    <property type="term" value="P:negative regulation of auxin mediated signaling pathway"/>
    <property type="evidence" value="ECO:0007669"/>
    <property type="project" value="EnsemblPlants"/>
</dbReference>
<dbReference type="GO" id="GO:0045892">
    <property type="term" value="P:negative regulation of DNA-templated transcription"/>
    <property type="evidence" value="ECO:0007669"/>
    <property type="project" value="EnsemblPlants"/>
</dbReference>
<dbReference type="GO" id="GO:0010497">
    <property type="term" value="P:plasmodesmata-mediated intercellular transport"/>
    <property type="evidence" value="ECO:0000315"/>
    <property type="project" value="UniProtKB"/>
</dbReference>
<dbReference type="CDD" id="cd00086">
    <property type="entry name" value="homeodomain"/>
    <property type="match status" value="1"/>
</dbReference>
<dbReference type="FunFam" id="1.10.10.60:FF:000076">
    <property type="entry name" value="Homeobox protein knotted-1-like 2"/>
    <property type="match status" value="1"/>
</dbReference>
<dbReference type="Gene3D" id="1.10.10.60">
    <property type="entry name" value="Homeodomain-like"/>
    <property type="match status" value="1"/>
</dbReference>
<dbReference type="InterPro" id="IPR005539">
    <property type="entry name" value="ELK_dom"/>
</dbReference>
<dbReference type="InterPro" id="IPR001356">
    <property type="entry name" value="HD"/>
</dbReference>
<dbReference type="InterPro" id="IPR017970">
    <property type="entry name" value="Homeobox_CS"/>
</dbReference>
<dbReference type="InterPro" id="IPR009057">
    <property type="entry name" value="Homeodomain-like_sf"/>
</dbReference>
<dbReference type="InterPro" id="IPR008422">
    <property type="entry name" value="KN_HD"/>
</dbReference>
<dbReference type="InterPro" id="IPR005540">
    <property type="entry name" value="KNOX1"/>
</dbReference>
<dbReference type="InterPro" id="IPR005541">
    <property type="entry name" value="KNOX2"/>
</dbReference>
<dbReference type="InterPro" id="IPR050224">
    <property type="entry name" value="TALE_homeobox"/>
</dbReference>
<dbReference type="PANTHER" id="PTHR11850">
    <property type="entry name" value="HOMEOBOX PROTEIN TRANSCRIPTION FACTORS"/>
    <property type="match status" value="1"/>
</dbReference>
<dbReference type="Pfam" id="PF03789">
    <property type="entry name" value="ELK"/>
    <property type="match status" value="1"/>
</dbReference>
<dbReference type="Pfam" id="PF05920">
    <property type="entry name" value="Homeobox_KN"/>
    <property type="match status" value="1"/>
</dbReference>
<dbReference type="Pfam" id="PF03790">
    <property type="entry name" value="KNOX1"/>
    <property type="match status" value="1"/>
</dbReference>
<dbReference type="Pfam" id="PF03791">
    <property type="entry name" value="KNOX2"/>
    <property type="match status" value="1"/>
</dbReference>
<dbReference type="SMART" id="SM01188">
    <property type="entry name" value="ELK"/>
    <property type="match status" value="2"/>
</dbReference>
<dbReference type="SMART" id="SM00389">
    <property type="entry name" value="HOX"/>
    <property type="match status" value="1"/>
</dbReference>
<dbReference type="SMART" id="SM01255">
    <property type="entry name" value="KNOX1"/>
    <property type="match status" value="1"/>
</dbReference>
<dbReference type="SMART" id="SM01256">
    <property type="entry name" value="KNOX2"/>
    <property type="match status" value="1"/>
</dbReference>
<dbReference type="SUPFAM" id="SSF46689">
    <property type="entry name" value="Homeodomain-like"/>
    <property type="match status" value="1"/>
</dbReference>
<dbReference type="PROSITE" id="PS51213">
    <property type="entry name" value="ELK"/>
    <property type="match status" value="1"/>
</dbReference>
<dbReference type="PROSITE" id="PS00027">
    <property type="entry name" value="HOMEOBOX_1"/>
    <property type="match status" value="1"/>
</dbReference>
<dbReference type="PROSITE" id="PS50071">
    <property type="entry name" value="HOMEOBOX_2"/>
    <property type="match status" value="1"/>
</dbReference>
<sequence>MEEITQHFGVGASSHGHGHGQHHHHHHHHHPWASSLSAVVAPLPPQPPSAGLPLTLNTVAATGNSGGSGNPVLQLANGGGLLDACVKAKEPSSSSPYAGDVEAIKAKIISHPHYYSLLTAYLECNKVGAPPEVSARLTEIAQEVEARQRTALGGLAAATEPELDQFMEAYHEMLVKFREELTRPLQEAMEFMRRVESQLNSLSISGRSLRNILSSGSSEEDQEGSGGETELPEVDAHGVDQELKHHLLKKYSGYLSSLKQELSKKKKKGKLPKEARQQLLSWWDQHYKWPYPSETQKVALAESTGLDLKQINNWFINQRKRHWKPSEEMHHLMMDGYHTTNAFYMDGHFINDGGLYRLG</sequence>
<reference key="1">
    <citation type="journal article" date="1991" name="Nature">
        <title>The developmental gene Knotted-1 is a member of a maize homeobox gene family.</title>
        <authorList>
            <person name="Vollbrecht E."/>
            <person name="Veit B."/>
            <person name="Sinha N."/>
            <person name="Hake S."/>
        </authorList>
    </citation>
    <scope>NUCLEOTIDE SEQUENCE [MRNA]</scope>
</reference>
<reference key="2">
    <citation type="journal article" date="1992" name="Development">
        <title>A dominant mutation in the maize homeobox gene, Knotted-1, causes its ectopic expression in leaf cells with altered fates.</title>
        <authorList>
            <person name="Smith L.G."/>
            <person name="Green B."/>
            <person name="Veit B."/>
            <person name="Hake S."/>
        </authorList>
    </citation>
    <scope>DEVELOPMENTAL STAGE</scope>
    <source>
        <strain>cv. B73</strain>
    </source>
</reference>
<reference key="3">
    <citation type="journal article" date="1996" name="Plant Mol. Biol.">
        <title>The conserved ELK-homeodomain of KNOTTED-1 contains two regions that signal nuclear localization.</title>
        <authorList>
            <person name="Meisel L."/>
            <person name="Lam E."/>
        </authorList>
    </citation>
    <scope>SUBCELLULAR LOCATION</scope>
</reference>
<reference key="4">
    <citation type="journal article" date="2007" name="Plant Cell">
        <title>MPB2C, a microtubule-associated protein, regulates non-cell-autonomy of the homeodomain protein KNOTTED1.</title>
        <authorList>
            <person name="Winter N."/>
            <person name="Kollwig G."/>
            <person name="Zhang S."/>
            <person name="Kragler F."/>
        </authorList>
    </citation>
    <scope>FUNCTION</scope>
    <scope>INTERACTION WITH MBP2C</scope>
    <scope>MUTAGENESIS OF 265-LYS--LYS-267</scope>
    <scope>SUBCELLULAR LOCATION</scope>
</reference>
<proteinExistence type="evidence at protein level"/>
<comment type="function">
    <text evidence="6">Binds to RNA (PubMed:17965274). Possible transcription factor that regulates genes involved in development. Mutations in KN-1 alter leaf development. Foci of cells along the lateral vein do not differentiate properly but continue to divide, forming knots. May participate in the switch from indeterminate to determinate cell fates. Probably binds to the DNA sequence 5'-TGAC-3'.</text>
</comment>
<comment type="subunit">
    <text evidence="1 6">Forms homodimers (By similarity). Binds to MBP2C; this interaction reduces RNA binding capacity (PubMed:17965274).</text>
</comment>
<comment type="subcellular location">
    <subcellularLocation>
        <location evidence="2 3 6 7">Nucleus</location>
    </subcellularLocation>
    <subcellularLocation>
        <location evidence="6">Cell junction</location>
        <location evidence="6">Plasmodesma</location>
    </subcellularLocation>
    <subcellularLocation>
        <location evidence="6">Cytoplasm</location>
    </subcellularLocation>
    <text evidence="6">Dynamic localization via a plasmodesmata-mediated cell-to-cell transport. This shuttle is repressed by MBP2C binding in cytosolic punctae, at microtubules.</text>
</comment>
<comment type="tissue specificity">
    <text>Expressed in apical meristems of vegetative and floral stems as well as in the underlying ground meristem. Specifically expressed in vascular bundles developing both in the leaf and stem. Very low levels of expression in leaves.</text>
</comment>
<comment type="developmental stage">
    <text evidence="5">Expressed throughout apical and vegetative meristem during development. Down-regulated as leaves and floral organs are initiated.</text>
</comment>
<comment type="similarity">
    <text evidence="3">Belongs to the TALE/KNOX homeobox family.</text>
</comment>
<gene>
    <name type="primary">KN-1</name>
</gene>
<protein>
    <recommendedName>
        <fullName>Homeotic protein knotted-1</fullName>
    </recommendedName>
</protein>
<keyword id="KW-0965">Cell junction</keyword>
<keyword id="KW-0963">Cytoplasm</keyword>
<keyword id="KW-0238">DNA-binding</keyword>
<keyword id="KW-0371">Homeobox</keyword>
<keyword id="KW-0539">Nucleus</keyword>
<keyword id="KW-1185">Reference proteome</keyword>
<keyword id="KW-0694">RNA-binding</keyword>
<keyword id="KW-0804">Transcription</keyword>
<keyword id="KW-0805">Transcription regulation</keyword>
<feature type="chain" id="PRO_0000048956" description="Homeotic protein knotted-1">
    <location>
        <begin position="1"/>
        <end position="359"/>
    </location>
</feature>
<feature type="domain" description="ELK" evidence="3">
    <location>
        <begin position="242"/>
        <end position="262"/>
    </location>
</feature>
<feature type="DNA-binding region" description="Homeobox; TALE-type" evidence="2">
    <location>
        <begin position="263"/>
        <end position="326"/>
    </location>
</feature>
<feature type="region of interest" description="Disordered" evidence="4">
    <location>
        <begin position="1"/>
        <end position="34"/>
    </location>
</feature>
<feature type="region of interest" description="Disordered" evidence="4">
    <location>
        <begin position="213"/>
        <end position="232"/>
    </location>
</feature>
<feature type="compositionally biased region" description="Basic residues" evidence="4">
    <location>
        <begin position="16"/>
        <end position="31"/>
    </location>
</feature>
<feature type="mutagenesis site" description="In KN1M6; defective in cell-to-cell movement capacity. Reduced interaction with MPB2C." evidence="6">
    <original>KKK</original>
    <variation>AAA</variation>
    <location>
        <begin position="265"/>
        <end position="267"/>
    </location>
</feature>
<organism>
    <name type="scientific">Zea mays</name>
    <name type="common">Maize</name>
    <dbReference type="NCBI Taxonomy" id="4577"/>
    <lineage>
        <taxon>Eukaryota</taxon>
        <taxon>Viridiplantae</taxon>
        <taxon>Streptophyta</taxon>
        <taxon>Embryophyta</taxon>
        <taxon>Tracheophyta</taxon>
        <taxon>Spermatophyta</taxon>
        <taxon>Magnoliopsida</taxon>
        <taxon>Liliopsida</taxon>
        <taxon>Poales</taxon>
        <taxon>Poaceae</taxon>
        <taxon>PACMAD clade</taxon>
        <taxon>Panicoideae</taxon>
        <taxon>Andropogonodae</taxon>
        <taxon>Andropogoneae</taxon>
        <taxon>Tripsacinae</taxon>
        <taxon>Zea</taxon>
    </lineage>
</organism>
<accession>P24345</accession>
<name>KN1_MAIZE</name>